<sequence>MNEAFDCVVIGAGPGGYVAAITAAQAGLKTALIEEREAGGTCLNRGCIPSKALLASAEIVAQIRHADQFGIHINGFSIDYPAMVQRKDTVVRSIRDGLNGLIRSNKITVFSGRGSLISSTEVKILGETPSVIKAQSIILATGSEPRAFPGVPFSQQSPRILCSTGVLNLKEIPQKMAIIGGGVIGCEFASLFHTLGSEVSVIEASQQILALNNPDISKTMFDKFTRHGIRFMLGASVSSIEDMGDRVRLTINGNIEEYDYVLVSIGRRLNTENIGLDKAGVICDERGVIPTDSTMRTNVPNIYAIGDITGKWQLAHVASHQGIVAARNIAGHKDEIDYSAVPSVIFTFPEVASVGLSPTSAQQQGIPVKVTKFPFRAIGKAVAMGESDGFAAIISHETSQQILGAYVIGPHASSLISEITLAIRNELTLPCIYETIHAHPTLAEVWAESALLAVDTPLHMPPTRK</sequence>
<organism>
    <name type="scientific">Chlamydia muridarum (strain MoPn / Nigg)</name>
    <dbReference type="NCBI Taxonomy" id="243161"/>
    <lineage>
        <taxon>Bacteria</taxon>
        <taxon>Pseudomonadati</taxon>
        <taxon>Chlamydiota</taxon>
        <taxon>Chlamydiia</taxon>
        <taxon>Chlamydiales</taxon>
        <taxon>Chlamydiaceae</taxon>
        <taxon>Chlamydia/Chlamydophila group</taxon>
        <taxon>Chlamydia</taxon>
    </lineage>
</organism>
<accession>Q9PJI3</accession>
<evidence type="ECO:0000250" key="1"/>
<evidence type="ECO:0000305" key="2"/>
<gene>
    <name type="primary">lpdA</name>
    <name type="ordered locus">TC_0846</name>
</gene>
<feature type="chain" id="PRO_0000068024" description="Dihydrolipoyl dehydrogenase">
    <location>
        <begin position="1"/>
        <end position="465"/>
    </location>
</feature>
<feature type="active site" description="Proton acceptor" evidence="1">
    <location>
        <position position="439"/>
    </location>
</feature>
<feature type="binding site" evidence="1">
    <location>
        <begin position="34"/>
        <end position="42"/>
    </location>
    <ligand>
        <name>FAD</name>
        <dbReference type="ChEBI" id="CHEBI:57692"/>
    </ligand>
</feature>
<feature type="binding site" evidence="1">
    <location>
        <position position="51"/>
    </location>
    <ligand>
        <name>FAD</name>
        <dbReference type="ChEBI" id="CHEBI:57692"/>
    </ligand>
</feature>
<feature type="binding site" evidence="1">
    <location>
        <position position="114"/>
    </location>
    <ligand>
        <name>FAD</name>
        <dbReference type="ChEBI" id="CHEBI:57692"/>
    </ligand>
</feature>
<feature type="binding site" evidence="1">
    <location>
        <begin position="180"/>
        <end position="184"/>
    </location>
    <ligand>
        <name>NAD(+)</name>
        <dbReference type="ChEBI" id="CHEBI:57540"/>
    </ligand>
</feature>
<feature type="binding site" evidence="1">
    <location>
        <position position="203"/>
    </location>
    <ligand>
        <name>NAD(+)</name>
        <dbReference type="ChEBI" id="CHEBI:57540"/>
    </ligand>
</feature>
<feature type="binding site" evidence="1">
    <location>
        <position position="237"/>
    </location>
    <ligand>
        <name>NAD(+)</name>
        <dbReference type="ChEBI" id="CHEBI:57540"/>
    </ligand>
</feature>
<feature type="binding site" evidence="1">
    <location>
        <begin position="264"/>
        <end position="267"/>
    </location>
    <ligand>
        <name>NAD(+)</name>
        <dbReference type="ChEBI" id="CHEBI:57540"/>
    </ligand>
</feature>
<feature type="binding site" evidence="1">
    <location>
        <position position="307"/>
    </location>
    <ligand>
        <name>FAD</name>
        <dbReference type="ChEBI" id="CHEBI:57692"/>
    </ligand>
</feature>
<feature type="binding site" evidence="1">
    <location>
        <position position="315"/>
    </location>
    <ligand>
        <name>FAD</name>
        <dbReference type="ChEBI" id="CHEBI:57692"/>
    </ligand>
</feature>
<feature type="disulfide bond" description="Redox-active" evidence="1">
    <location>
        <begin position="42"/>
        <end position="47"/>
    </location>
</feature>
<protein>
    <recommendedName>
        <fullName>Dihydrolipoyl dehydrogenase</fullName>
        <ecNumber>1.8.1.4</ecNumber>
    </recommendedName>
    <alternativeName>
        <fullName>Dihydrolipoamide dehydrogenase</fullName>
    </alternativeName>
    <alternativeName>
        <fullName>E3 component of 2-oxoglutarate dehydrogenase complex</fullName>
    </alternativeName>
</protein>
<comment type="function">
    <text evidence="1">The branched-chain alpha-keto dehydrogenase complex catalyzes the overall conversion of alpha-keto acids to acyl-CoA and CO(2). It contains multiple copies of 3 enzymatic components: branched-chain alpha-keto acid decarboxylase (E1), lipoamide acyltransferase (E2) and lipoamide dehydrogenase (E3) (By similarity).</text>
</comment>
<comment type="catalytic activity">
    <reaction>
        <text>N(6)-[(R)-dihydrolipoyl]-L-lysyl-[protein] + NAD(+) = N(6)-[(R)-lipoyl]-L-lysyl-[protein] + NADH + H(+)</text>
        <dbReference type="Rhea" id="RHEA:15045"/>
        <dbReference type="Rhea" id="RHEA-COMP:10474"/>
        <dbReference type="Rhea" id="RHEA-COMP:10475"/>
        <dbReference type="ChEBI" id="CHEBI:15378"/>
        <dbReference type="ChEBI" id="CHEBI:57540"/>
        <dbReference type="ChEBI" id="CHEBI:57945"/>
        <dbReference type="ChEBI" id="CHEBI:83099"/>
        <dbReference type="ChEBI" id="CHEBI:83100"/>
        <dbReference type="EC" id="1.8.1.4"/>
    </reaction>
</comment>
<comment type="cofactor">
    <cofactor evidence="1">
        <name>FAD</name>
        <dbReference type="ChEBI" id="CHEBI:57692"/>
    </cofactor>
    <text evidence="1">Binds 1 FAD per subunit.</text>
</comment>
<comment type="subcellular location">
    <subcellularLocation>
        <location evidence="1">Cytoplasm</location>
    </subcellularLocation>
</comment>
<comment type="miscellaneous">
    <text>The active site is a redox-active disulfide bond.</text>
</comment>
<comment type="similarity">
    <text evidence="2">Belongs to the class-I pyridine nucleotide-disulfide oxidoreductase family.</text>
</comment>
<keyword id="KW-0963">Cytoplasm</keyword>
<keyword id="KW-1015">Disulfide bond</keyword>
<keyword id="KW-0274">FAD</keyword>
<keyword id="KW-0285">Flavoprotein</keyword>
<keyword id="KW-0520">NAD</keyword>
<keyword id="KW-0560">Oxidoreductase</keyword>
<keyword id="KW-0676">Redox-active center</keyword>
<proteinExistence type="inferred from homology"/>
<reference key="1">
    <citation type="journal article" date="2000" name="Nucleic Acids Res.">
        <title>Genome sequences of Chlamydia trachomatis MoPn and Chlamydia pneumoniae AR39.</title>
        <authorList>
            <person name="Read T.D."/>
            <person name="Brunham R.C."/>
            <person name="Shen C."/>
            <person name="Gill S.R."/>
            <person name="Heidelberg J.F."/>
            <person name="White O."/>
            <person name="Hickey E.K."/>
            <person name="Peterson J.D."/>
            <person name="Utterback T.R."/>
            <person name="Berry K.J."/>
            <person name="Bass S."/>
            <person name="Linher K.D."/>
            <person name="Weidman J.F."/>
            <person name="Khouri H.M."/>
            <person name="Craven B."/>
            <person name="Bowman C."/>
            <person name="Dodson R.J."/>
            <person name="Gwinn M.L."/>
            <person name="Nelson W.C."/>
            <person name="DeBoy R.T."/>
            <person name="Kolonay J.F."/>
            <person name="McClarty G."/>
            <person name="Salzberg S.L."/>
            <person name="Eisen J.A."/>
            <person name="Fraser C.M."/>
        </authorList>
    </citation>
    <scope>NUCLEOTIDE SEQUENCE [LARGE SCALE GENOMIC DNA]</scope>
    <source>
        <strain>MoPn / Nigg</strain>
    </source>
</reference>
<name>DLDH_CHLMU</name>
<dbReference type="EC" id="1.8.1.4"/>
<dbReference type="EMBL" id="AE002160">
    <property type="protein sequence ID" value="AAF39644.1"/>
    <property type="molecule type" value="Genomic_DNA"/>
</dbReference>
<dbReference type="PIR" id="B81658">
    <property type="entry name" value="B81658"/>
</dbReference>
<dbReference type="RefSeq" id="WP_010231740.1">
    <property type="nucleotide sequence ID" value="NZ_CP063055.1"/>
</dbReference>
<dbReference type="SMR" id="Q9PJI3"/>
<dbReference type="GeneID" id="1246214"/>
<dbReference type="KEGG" id="cmu:TC_0846"/>
<dbReference type="eggNOG" id="COG1249">
    <property type="taxonomic scope" value="Bacteria"/>
</dbReference>
<dbReference type="HOGENOM" id="CLU_016755_0_3_0"/>
<dbReference type="OrthoDB" id="9807946at2"/>
<dbReference type="Proteomes" id="UP000000800">
    <property type="component" value="Chromosome"/>
</dbReference>
<dbReference type="GO" id="GO:0005737">
    <property type="term" value="C:cytoplasm"/>
    <property type="evidence" value="ECO:0007669"/>
    <property type="project" value="UniProtKB-SubCell"/>
</dbReference>
<dbReference type="GO" id="GO:0004148">
    <property type="term" value="F:dihydrolipoyl dehydrogenase (NADH) activity"/>
    <property type="evidence" value="ECO:0007669"/>
    <property type="project" value="UniProtKB-EC"/>
</dbReference>
<dbReference type="GO" id="GO:0050660">
    <property type="term" value="F:flavin adenine dinucleotide binding"/>
    <property type="evidence" value="ECO:0007669"/>
    <property type="project" value="InterPro"/>
</dbReference>
<dbReference type="GO" id="GO:0006103">
    <property type="term" value="P:2-oxoglutarate metabolic process"/>
    <property type="evidence" value="ECO:0007669"/>
    <property type="project" value="TreeGrafter"/>
</dbReference>
<dbReference type="FunFam" id="3.30.390.30:FF:000001">
    <property type="entry name" value="Dihydrolipoyl dehydrogenase"/>
    <property type="match status" value="1"/>
</dbReference>
<dbReference type="Gene3D" id="3.30.390.30">
    <property type="match status" value="1"/>
</dbReference>
<dbReference type="Gene3D" id="3.50.50.60">
    <property type="entry name" value="FAD/NAD(P)-binding domain"/>
    <property type="match status" value="2"/>
</dbReference>
<dbReference type="InterPro" id="IPR050151">
    <property type="entry name" value="Class-I_Pyr_Nuc-Dis_Oxidored"/>
</dbReference>
<dbReference type="InterPro" id="IPR036188">
    <property type="entry name" value="FAD/NAD-bd_sf"/>
</dbReference>
<dbReference type="InterPro" id="IPR023753">
    <property type="entry name" value="FAD/NAD-binding_dom"/>
</dbReference>
<dbReference type="InterPro" id="IPR016156">
    <property type="entry name" value="FAD/NAD-linked_Rdtase_dimer_sf"/>
</dbReference>
<dbReference type="InterPro" id="IPR006258">
    <property type="entry name" value="Lipoamide_DH"/>
</dbReference>
<dbReference type="InterPro" id="IPR001100">
    <property type="entry name" value="Pyr_nuc-diS_OxRdtase"/>
</dbReference>
<dbReference type="InterPro" id="IPR004099">
    <property type="entry name" value="Pyr_nucl-diS_OxRdtase_dimer"/>
</dbReference>
<dbReference type="InterPro" id="IPR012999">
    <property type="entry name" value="Pyr_OxRdtase_I_AS"/>
</dbReference>
<dbReference type="NCBIfam" id="TIGR01350">
    <property type="entry name" value="lipoamide_DH"/>
    <property type="match status" value="1"/>
</dbReference>
<dbReference type="PANTHER" id="PTHR22912:SF217">
    <property type="entry name" value="DIHYDROLIPOYL DEHYDROGENASE"/>
    <property type="match status" value="1"/>
</dbReference>
<dbReference type="PANTHER" id="PTHR22912">
    <property type="entry name" value="DISULFIDE OXIDOREDUCTASE"/>
    <property type="match status" value="1"/>
</dbReference>
<dbReference type="Pfam" id="PF07992">
    <property type="entry name" value="Pyr_redox_2"/>
    <property type="match status" value="1"/>
</dbReference>
<dbReference type="Pfam" id="PF02852">
    <property type="entry name" value="Pyr_redox_dim"/>
    <property type="match status" value="1"/>
</dbReference>
<dbReference type="PIRSF" id="PIRSF000350">
    <property type="entry name" value="Mercury_reductase_MerA"/>
    <property type="match status" value="1"/>
</dbReference>
<dbReference type="PRINTS" id="PR00368">
    <property type="entry name" value="FADPNR"/>
</dbReference>
<dbReference type="PRINTS" id="PR00411">
    <property type="entry name" value="PNDRDTASEI"/>
</dbReference>
<dbReference type="SUPFAM" id="SSF51905">
    <property type="entry name" value="FAD/NAD(P)-binding domain"/>
    <property type="match status" value="1"/>
</dbReference>
<dbReference type="SUPFAM" id="SSF55424">
    <property type="entry name" value="FAD/NAD-linked reductases, dimerisation (C-terminal) domain"/>
    <property type="match status" value="1"/>
</dbReference>
<dbReference type="PROSITE" id="PS00076">
    <property type="entry name" value="PYRIDINE_REDOX_1"/>
    <property type="match status" value="1"/>
</dbReference>